<proteinExistence type="inferred from homology"/>
<sequence length="123" mass="13936">MVRATGSVASRSRRKRVLKQAKGFWGDRKGHFRQSRSSVMRAMAFNYMHRKDRKGDFRSLWITRLNVASRIHGLSYSRLINGLKQAGIHLNRKMLSEMAIHDPQGFAVVATQAKLALEAAVQG</sequence>
<protein>
    <recommendedName>
        <fullName evidence="1">Large ribosomal subunit protein bL20</fullName>
    </recommendedName>
    <alternativeName>
        <fullName evidence="2">50S ribosomal protein L20</fullName>
    </alternativeName>
</protein>
<feature type="chain" id="PRO_1000122293" description="Large ribosomal subunit protein bL20">
    <location>
        <begin position="1"/>
        <end position="123"/>
    </location>
</feature>
<reference key="1">
    <citation type="journal article" date="2008" name="Genome Res.">
        <title>Chlamydia trachomatis: genome sequence analysis of lymphogranuloma venereum isolates.</title>
        <authorList>
            <person name="Thomson N.R."/>
            <person name="Holden M.T.G."/>
            <person name="Carder C."/>
            <person name="Lennard N."/>
            <person name="Lockey S.J."/>
            <person name="Marsh P."/>
            <person name="Skipp P."/>
            <person name="O'Connor C.D."/>
            <person name="Goodhead I."/>
            <person name="Norbertzcak H."/>
            <person name="Harris B."/>
            <person name="Ormond D."/>
            <person name="Rance R."/>
            <person name="Quail M.A."/>
            <person name="Parkhill J."/>
            <person name="Stephens R.S."/>
            <person name="Clarke I.N."/>
        </authorList>
    </citation>
    <scope>NUCLEOTIDE SEQUENCE [LARGE SCALE GENOMIC DNA]</scope>
    <source>
        <strain>UCH-1/proctitis</strain>
    </source>
</reference>
<accession>B0BAU3</accession>
<name>RL20_CHLTB</name>
<evidence type="ECO:0000255" key="1">
    <source>
        <dbReference type="HAMAP-Rule" id="MF_00382"/>
    </source>
</evidence>
<evidence type="ECO:0000305" key="2"/>
<dbReference type="EMBL" id="AM884177">
    <property type="protein sequence ID" value="CAP06605.1"/>
    <property type="molecule type" value="Genomic_DNA"/>
</dbReference>
<dbReference type="RefSeq" id="WP_009872966.1">
    <property type="nucleotide sequence ID" value="NC_010280.2"/>
</dbReference>
<dbReference type="SMR" id="B0BAU3"/>
<dbReference type="KEGG" id="ctl:CTLon_0207"/>
<dbReference type="HOGENOM" id="CLU_123265_0_1_0"/>
<dbReference type="Proteomes" id="UP001154401">
    <property type="component" value="Chromosome"/>
</dbReference>
<dbReference type="GO" id="GO:1990904">
    <property type="term" value="C:ribonucleoprotein complex"/>
    <property type="evidence" value="ECO:0007669"/>
    <property type="project" value="UniProtKB-KW"/>
</dbReference>
<dbReference type="GO" id="GO:0005840">
    <property type="term" value="C:ribosome"/>
    <property type="evidence" value="ECO:0007669"/>
    <property type="project" value="UniProtKB-KW"/>
</dbReference>
<dbReference type="GO" id="GO:0019843">
    <property type="term" value="F:rRNA binding"/>
    <property type="evidence" value="ECO:0007669"/>
    <property type="project" value="UniProtKB-UniRule"/>
</dbReference>
<dbReference type="GO" id="GO:0003735">
    <property type="term" value="F:structural constituent of ribosome"/>
    <property type="evidence" value="ECO:0007669"/>
    <property type="project" value="InterPro"/>
</dbReference>
<dbReference type="GO" id="GO:0000027">
    <property type="term" value="P:ribosomal large subunit assembly"/>
    <property type="evidence" value="ECO:0007669"/>
    <property type="project" value="UniProtKB-UniRule"/>
</dbReference>
<dbReference type="GO" id="GO:0006412">
    <property type="term" value="P:translation"/>
    <property type="evidence" value="ECO:0007669"/>
    <property type="project" value="InterPro"/>
</dbReference>
<dbReference type="CDD" id="cd07026">
    <property type="entry name" value="Ribosomal_L20"/>
    <property type="match status" value="1"/>
</dbReference>
<dbReference type="FunFam" id="1.10.1900.20:FF:000001">
    <property type="entry name" value="50S ribosomal protein L20"/>
    <property type="match status" value="1"/>
</dbReference>
<dbReference type="Gene3D" id="6.10.160.10">
    <property type="match status" value="1"/>
</dbReference>
<dbReference type="Gene3D" id="1.10.1900.20">
    <property type="entry name" value="Ribosomal protein L20"/>
    <property type="match status" value="1"/>
</dbReference>
<dbReference type="HAMAP" id="MF_00382">
    <property type="entry name" value="Ribosomal_bL20"/>
    <property type="match status" value="1"/>
</dbReference>
<dbReference type="InterPro" id="IPR005813">
    <property type="entry name" value="Ribosomal_bL20"/>
</dbReference>
<dbReference type="InterPro" id="IPR049946">
    <property type="entry name" value="RIBOSOMAL_L20_CS"/>
</dbReference>
<dbReference type="InterPro" id="IPR035566">
    <property type="entry name" value="Ribosomal_protein_bL20_C"/>
</dbReference>
<dbReference type="NCBIfam" id="TIGR01032">
    <property type="entry name" value="rplT_bact"/>
    <property type="match status" value="1"/>
</dbReference>
<dbReference type="PANTHER" id="PTHR10986">
    <property type="entry name" value="39S RIBOSOMAL PROTEIN L20"/>
    <property type="match status" value="1"/>
</dbReference>
<dbReference type="Pfam" id="PF00453">
    <property type="entry name" value="Ribosomal_L20"/>
    <property type="match status" value="1"/>
</dbReference>
<dbReference type="PRINTS" id="PR00062">
    <property type="entry name" value="RIBOSOMALL20"/>
</dbReference>
<dbReference type="SUPFAM" id="SSF74731">
    <property type="entry name" value="Ribosomal protein L20"/>
    <property type="match status" value="1"/>
</dbReference>
<dbReference type="PROSITE" id="PS00937">
    <property type="entry name" value="RIBOSOMAL_L20"/>
    <property type="match status" value="1"/>
</dbReference>
<organism>
    <name type="scientific">Chlamydia trachomatis serovar L2b (strain UCH-1/proctitis)</name>
    <dbReference type="NCBI Taxonomy" id="471473"/>
    <lineage>
        <taxon>Bacteria</taxon>
        <taxon>Pseudomonadati</taxon>
        <taxon>Chlamydiota</taxon>
        <taxon>Chlamydiia</taxon>
        <taxon>Chlamydiales</taxon>
        <taxon>Chlamydiaceae</taxon>
        <taxon>Chlamydia/Chlamydophila group</taxon>
        <taxon>Chlamydia</taxon>
    </lineage>
</organism>
<gene>
    <name evidence="1" type="primary">rplT</name>
    <name type="ordered locus">CTLon_0207</name>
</gene>
<comment type="function">
    <text evidence="1">Binds directly to 23S ribosomal RNA and is necessary for the in vitro assembly process of the 50S ribosomal subunit. It is not involved in the protein synthesizing functions of that subunit.</text>
</comment>
<comment type="similarity">
    <text evidence="1">Belongs to the bacterial ribosomal protein bL20 family.</text>
</comment>
<keyword id="KW-0687">Ribonucleoprotein</keyword>
<keyword id="KW-0689">Ribosomal protein</keyword>
<keyword id="KW-0694">RNA-binding</keyword>
<keyword id="KW-0699">rRNA-binding</keyword>